<reference key="1">
    <citation type="journal article" date="2002" name="Nature">
        <title>The genome sequence of Schizosaccharomyces pombe.</title>
        <authorList>
            <person name="Wood V."/>
            <person name="Gwilliam R."/>
            <person name="Rajandream M.A."/>
            <person name="Lyne M.H."/>
            <person name="Lyne R."/>
            <person name="Stewart A."/>
            <person name="Sgouros J.G."/>
            <person name="Peat N."/>
            <person name="Hayles J."/>
            <person name="Baker S.G."/>
            <person name="Basham D."/>
            <person name="Bowman S."/>
            <person name="Brooks K."/>
            <person name="Brown D."/>
            <person name="Brown S."/>
            <person name="Chillingworth T."/>
            <person name="Churcher C.M."/>
            <person name="Collins M."/>
            <person name="Connor R."/>
            <person name="Cronin A."/>
            <person name="Davis P."/>
            <person name="Feltwell T."/>
            <person name="Fraser A."/>
            <person name="Gentles S."/>
            <person name="Goble A."/>
            <person name="Hamlin N."/>
            <person name="Harris D.E."/>
            <person name="Hidalgo J."/>
            <person name="Hodgson G."/>
            <person name="Holroyd S."/>
            <person name="Hornsby T."/>
            <person name="Howarth S."/>
            <person name="Huckle E.J."/>
            <person name="Hunt S."/>
            <person name="Jagels K."/>
            <person name="James K.D."/>
            <person name="Jones L."/>
            <person name="Jones M."/>
            <person name="Leather S."/>
            <person name="McDonald S."/>
            <person name="McLean J."/>
            <person name="Mooney P."/>
            <person name="Moule S."/>
            <person name="Mungall K.L."/>
            <person name="Murphy L.D."/>
            <person name="Niblett D."/>
            <person name="Odell C."/>
            <person name="Oliver K."/>
            <person name="O'Neil S."/>
            <person name="Pearson D."/>
            <person name="Quail M.A."/>
            <person name="Rabbinowitsch E."/>
            <person name="Rutherford K.M."/>
            <person name="Rutter S."/>
            <person name="Saunders D."/>
            <person name="Seeger K."/>
            <person name="Sharp S."/>
            <person name="Skelton J."/>
            <person name="Simmonds M.N."/>
            <person name="Squares R."/>
            <person name="Squares S."/>
            <person name="Stevens K."/>
            <person name="Taylor K."/>
            <person name="Taylor R.G."/>
            <person name="Tivey A."/>
            <person name="Walsh S.V."/>
            <person name="Warren T."/>
            <person name="Whitehead S."/>
            <person name="Woodward J.R."/>
            <person name="Volckaert G."/>
            <person name="Aert R."/>
            <person name="Robben J."/>
            <person name="Grymonprez B."/>
            <person name="Weltjens I."/>
            <person name="Vanstreels E."/>
            <person name="Rieger M."/>
            <person name="Schaefer M."/>
            <person name="Mueller-Auer S."/>
            <person name="Gabel C."/>
            <person name="Fuchs M."/>
            <person name="Duesterhoeft A."/>
            <person name="Fritzc C."/>
            <person name="Holzer E."/>
            <person name="Moestl D."/>
            <person name="Hilbert H."/>
            <person name="Borzym K."/>
            <person name="Langer I."/>
            <person name="Beck A."/>
            <person name="Lehrach H."/>
            <person name="Reinhardt R."/>
            <person name="Pohl T.M."/>
            <person name="Eger P."/>
            <person name="Zimmermann W."/>
            <person name="Wedler H."/>
            <person name="Wambutt R."/>
            <person name="Purnelle B."/>
            <person name="Goffeau A."/>
            <person name="Cadieu E."/>
            <person name="Dreano S."/>
            <person name="Gloux S."/>
            <person name="Lelaure V."/>
            <person name="Mottier S."/>
            <person name="Galibert F."/>
            <person name="Aves S.J."/>
            <person name="Xiang Z."/>
            <person name="Hunt C."/>
            <person name="Moore K."/>
            <person name="Hurst S.M."/>
            <person name="Lucas M."/>
            <person name="Rochet M."/>
            <person name="Gaillardin C."/>
            <person name="Tallada V.A."/>
            <person name="Garzon A."/>
            <person name="Thode G."/>
            <person name="Daga R.R."/>
            <person name="Cruzado L."/>
            <person name="Jimenez J."/>
            <person name="Sanchez M."/>
            <person name="del Rey F."/>
            <person name="Benito J."/>
            <person name="Dominguez A."/>
            <person name="Revuelta J.L."/>
            <person name="Moreno S."/>
            <person name="Armstrong J."/>
            <person name="Forsburg S.L."/>
            <person name="Cerutti L."/>
            <person name="Lowe T."/>
            <person name="McCombie W.R."/>
            <person name="Paulsen I."/>
            <person name="Potashkin J."/>
            <person name="Shpakovski G.V."/>
            <person name="Ussery D."/>
            <person name="Barrell B.G."/>
            <person name="Nurse P."/>
        </authorList>
    </citation>
    <scope>NUCLEOTIDE SEQUENCE [LARGE SCALE GENOMIC DNA]</scope>
    <source>
        <strain>972 / ATCC 24843</strain>
    </source>
</reference>
<reference key="2">
    <citation type="journal article" date="2006" name="Nat. Biotechnol.">
        <title>ORFeome cloning and global analysis of protein localization in the fission yeast Schizosaccharomyces pombe.</title>
        <authorList>
            <person name="Matsuyama A."/>
            <person name="Arai R."/>
            <person name="Yashiroda Y."/>
            <person name="Shirai A."/>
            <person name="Kamata A."/>
            <person name="Sekido S."/>
            <person name="Kobayashi Y."/>
            <person name="Hashimoto A."/>
            <person name="Hamamoto M."/>
            <person name="Hiraoka Y."/>
            <person name="Horinouchi S."/>
            <person name="Yoshida M."/>
        </authorList>
    </citation>
    <scope>SUBCELLULAR LOCATION [LARGE SCALE ANALYSIS]</scope>
</reference>
<reference key="3">
    <citation type="journal article" date="2008" name="J. Proteome Res.">
        <title>Phosphoproteome analysis of fission yeast.</title>
        <authorList>
            <person name="Wilson-Grady J.T."/>
            <person name="Villen J."/>
            <person name="Gygi S.P."/>
        </authorList>
    </citation>
    <scope>PHOSPHORYLATION [LARGE SCALE ANALYSIS] AT THR-12</scope>
    <scope>IDENTIFICATION BY MASS SPECTROMETRY</scope>
</reference>
<dbReference type="EMBL" id="CU329671">
    <property type="protein sequence ID" value="CAA18417.1"/>
    <property type="molecule type" value="Genomic_DNA"/>
</dbReference>
<dbReference type="PIR" id="T39784">
    <property type="entry name" value="T39784"/>
</dbReference>
<dbReference type="BioGRID" id="277351">
    <property type="interactions" value="31"/>
</dbReference>
<dbReference type="FunCoup" id="O60150">
    <property type="interactions" value="300"/>
</dbReference>
<dbReference type="STRING" id="284812.O60150"/>
<dbReference type="iPTMnet" id="O60150"/>
<dbReference type="PaxDb" id="4896-SPBC18H10.20c.1"/>
<dbReference type="EnsemblFungi" id="SPBC18H10.20c.1">
    <property type="protein sequence ID" value="SPBC18H10.20c.1:pep"/>
    <property type="gene ID" value="SPBC18H10.20c"/>
</dbReference>
<dbReference type="KEGG" id="spo:2540833"/>
<dbReference type="PomBase" id="SPBC18H10.20c"/>
<dbReference type="VEuPathDB" id="FungiDB:SPBC18H10.20c"/>
<dbReference type="eggNOG" id="ENOG502QS9U">
    <property type="taxonomic scope" value="Eukaryota"/>
</dbReference>
<dbReference type="HOGENOM" id="CLU_026015_1_0_1"/>
<dbReference type="InParanoid" id="O60150"/>
<dbReference type="OMA" id="ISHCSAC"/>
<dbReference type="PhylomeDB" id="O60150"/>
<dbReference type="Reactome" id="R-SPO-844456">
    <property type="pathway name" value="The NLRP3 inflammasome"/>
</dbReference>
<dbReference type="PRO" id="PR:O60150"/>
<dbReference type="Proteomes" id="UP000002485">
    <property type="component" value="Chromosome II"/>
</dbReference>
<dbReference type="GO" id="GO:0030136">
    <property type="term" value="C:clathrin-coated vesicle"/>
    <property type="evidence" value="ECO:0000266"/>
    <property type="project" value="PomBase"/>
</dbReference>
<dbReference type="GO" id="GO:0005737">
    <property type="term" value="C:cytoplasm"/>
    <property type="evidence" value="ECO:0000318"/>
    <property type="project" value="GO_Central"/>
</dbReference>
<dbReference type="GO" id="GO:0005829">
    <property type="term" value="C:cytosol"/>
    <property type="evidence" value="ECO:0007005"/>
    <property type="project" value="PomBase"/>
</dbReference>
<dbReference type="GO" id="GO:0005634">
    <property type="term" value="C:nucleus"/>
    <property type="evidence" value="ECO:0007005"/>
    <property type="project" value="PomBase"/>
</dbReference>
<dbReference type="GO" id="GO:0140312">
    <property type="term" value="F:cargo adaptor activity"/>
    <property type="evidence" value="ECO:0000269"/>
    <property type="project" value="PomBase"/>
</dbReference>
<dbReference type="GO" id="GO:0030674">
    <property type="term" value="F:protein-macromolecule adaptor activity"/>
    <property type="evidence" value="ECO:0000318"/>
    <property type="project" value="GO_Central"/>
</dbReference>
<dbReference type="GO" id="GO:0031625">
    <property type="term" value="F:ubiquitin protein ligase binding"/>
    <property type="evidence" value="ECO:0000318"/>
    <property type="project" value="GO_Central"/>
</dbReference>
<dbReference type="GO" id="GO:0072583">
    <property type="term" value="P:clathrin-dependent endocytosis"/>
    <property type="evidence" value="ECO:0000315"/>
    <property type="project" value="PomBase"/>
</dbReference>
<dbReference type="GO" id="GO:0070086">
    <property type="term" value="P:ubiquitin-dependent endocytosis"/>
    <property type="evidence" value="ECO:0000318"/>
    <property type="project" value="GO_Central"/>
</dbReference>
<dbReference type="FunFam" id="2.60.40.640:FF:000063">
    <property type="entry name" value="Arrestin"/>
    <property type="match status" value="1"/>
</dbReference>
<dbReference type="Gene3D" id="2.60.40.640">
    <property type="match status" value="1"/>
</dbReference>
<dbReference type="InterPro" id="IPR014752">
    <property type="entry name" value="Arrestin-like_C"/>
</dbReference>
<dbReference type="InterPro" id="IPR024391">
    <property type="entry name" value="LDB19_N"/>
</dbReference>
<dbReference type="Pfam" id="PF13002">
    <property type="entry name" value="LDB19"/>
    <property type="match status" value="1"/>
</dbReference>
<comment type="subcellular location">
    <subcellularLocation>
        <location evidence="1">Cytoplasm</location>
    </subcellularLocation>
    <subcellularLocation>
        <location evidence="1">Nucleus</location>
    </subcellularLocation>
</comment>
<organism>
    <name type="scientific">Schizosaccharomyces pombe (strain 972 / ATCC 24843)</name>
    <name type="common">Fission yeast</name>
    <dbReference type="NCBI Taxonomy" id="284812"/>
    <lineage>
        <taxon>Eukaryota</taxon>
        <taxon>Fungi</taxon>
        <taxon>Dikarya</taxon>
        <taxon>Ascomycota</taxon>
        <taxon>Taphrinomycotina</taxon>
        <taxon>Schizosaccharomycetes</taxon>
        <taxon>Schizosaccharomycetales</taxon>
        <taxon>Schizosaccharomycetaceae</taxon>
        <taxon>Schizosaccharomyces</taxon>
    </lineage>
</organism>
<keyword id="KW-0963">Cytoplasm</keyword>
<keyword id="KW-0539">Nucleus</keyword>
<keyword id="KW-0597">Phosphoprotein</keyword>
<keyword id="KW-1185">Reference proteome</keyword>
<name>YNSK_SCHPO</name>
<sequence>MPLKLALPRSTTPKDPARCTLDIRMESPPLVFLGSPETSSGALASGILKLTILHQPFIKVHTLKLQLIKRITVLHPAISHCSACAGSKEVLQTWDLAANTTYRPGTQHWPFSWLFPGSLPASVSNRYIKLEYYLEATLCYGTPEGGISPSKPEVLKFPLQLKRAAIPSPDTIHKRIFPPTNLVANITLPSTLHPHGAALMEVTMTGFAQNDGNDWKINRVTWRLEEHMQFSCQPCERHRDLVKPRPIEEKRILSTQDLQSGWKFIDNQMFLSTQINTSSLREPSCDVEIPAPFSLKVSHHLIFETIVNRKKNVAGNNMGNARILRVSVVQPLTTPAGLGISWDEECPPVFESVGPAPPAYT</sequence>
<gene>
    <name type="ORF">SPBC18H10.20c</name>
</gene>
<protein>
    <recommendedName>
        <fullName>Uncharacterized protein C18H10.20c</fullName>
    </recommendedName>
</protein>
<proteinExistence type="evidence at protein level"/>
<feature type="chain" id="PRO_0000372372" description="Uncharacterized protein C18H10.20c">
    <location>
        <begin position="1"/>
        <end position="361"/>
    </location>
</feature>
<feature type="modified residue" description="Phosphothreonine" evidence="2">
    <location>
        <position position="12"/>
    </location>
</feature>
<evidence type="ECO:0000269" key="1">
    <source>
    </source>
</evidence>
<evidence type="ECO:0000269" key="2">
    <source>
    </source>
</evidence>
<accession>O60150</accession>